<comment type="function">
    <text evidence="1">Binds directly to 23S ribosomal RNA and is necessary for the in vitro assembly process of the 50S ribosomal subunit. It is not involved in the protein synthesizing functions of that subunit.</text>
</comment>
<comment type="similarity">
    <text evidence="1">Belongs to the bacterial ribosomal protein bL20 family.</text>
</comment>
<protein>
    <recommendedName>
        <fullName evidence="1">Large ribosomal subunit protein bL20</fullName>
    </recommendedName>
    <alternativeName>
        <fullName evidence="2">50S ribosomal protein L20</fullName>
    </alternativeName>
</protein>
<name>RL20_SYNS9</name>
<proteinExistence type="inferred from homology"/>
<reference key="1">
    <citation type="submission" date="2005-08" db="EMBL/GenBank/DDBJ databases">
        <title>Complete sequence of Synechococcus sp. CC9902.</title>
        <authorList>
            <person name="Copeland A."/>
            <person name="Lucas S."/>
            <person name="Lapidus A."/>
            <person name="Barry K."/>
            <person name="Detter J.C."/>
            <person name="Glavina T."/>
            <person name="Hammon N."/>
            <person name="Israni S."/>
            <person name="Pitluck S."/>
            <person name="Martinez M."/>
            <person name="Schmutz J."/>
            <person name="Larimer F."/>
            <person name="Land M."/>
            <person name="Kyrpides N."/>
            <person name="Ivanova N."/>
            <person name="Richardson P."/>
        </authorList>
    </citation>
    <scope>NUCLEOTIDE SEQUENCE [LARGE SCALE GENOMIC DNA]</scope>
    <source>
        <strain>CC9902</strain>
    </source>
</reference>
<dbReference type="EMBL" id="CP000097">
    <property type="protein sequence ID" value="ABB25029.1"/>
    <property type="molecule type" value="Genomic_DNA"/>
</dbReference>
<dbReference type="RefSeq" id="WP_011358897.1">
    <property type="nucleotide sequence ID" value="NC_007513.1"/>
</dbReference>
<dbReference type="SMR" id="Q3B0U9"/>
<dbReference type="STRING" id="316279.Syncc9902_0054"/>
<dbReference type="KEGG" id="sye:Syncc9902_0054"/>
<dbReference type="eggNOG" id="COG0292">
    <property type="taxonomic scope" value="Bacteria"/>
</dbReference>
<dbReference type="HOGENOM" id="CLU_123265_0_1_3"/>
<dbReference type="OrthoDB" id="9808966at2"/>
<dbReference type="Proteomes" id="UP000002712">
    <property type="component" value="Chromosome"/>
</dbReference>
<dbReference type="GO" id="GO:1990904">
    <property type="term" value="C:ribonucleoprotein complex"/>
    <property type="evidence" value="ECO:0007669"/>
    <property type="project" value="UniProtKB-KW"/>
</dbReference>
<dbReference type="GO" id="GO:0005840">
    <property type="term" value="C:ribosome"/>
    <property type="evidence" value="ECO:0007669"/>
    <property type="project" value="UniProtKB-KW"/>
</dbReference>
<dbReference type="GO" id="GO:0019843">
    <property type="term" value="F:rRNA binding"/>
    <property type="evidence" value="ECO:0007669"/>
    <property type="project" value="UniProtKB-UniRule"/>
</dbReference>
<dbReference type="GO" id="GO:0003735">
    <property type="term" value="F:structural constituent of ribosome"/>
    <property type="evidence" value="ECO:0007669"/>
    <property type="project" value="InterPro"/>
</dbReference>
<dbReference type="GO" id="GO:0000027">
    <property type="term" value="P:ribosomal large subunit assembly"/>
    <property type="evidence" value="ECO:0007669"/>
    <property type="project" value="UniProtKB-UniRule"/>
</dbReference>
<dbReference type="GO" id="GO:0006412">
    <property type="term" value="P:translation"/>
    <property type="evidence" value="ECO:0007669"/>
    <property type="project" value="InterPro"/>
</dbReference>
<dbReference type="CDD" id="cd07026">
    <property type="entry name" value="Ribosomal_L20"/>
    <property type="match status" value="1"/>
</dbReference>
<dbReference type="FunFam" id="1.10.1900.20:FF:000001">
    <property type="entry name" value="50S ribosomal protein L20"/>
    <property type="match status" value="1"/>
</dbReference>
<dbReference type="Gene3D" id="6.10.160.10">
    <property type="match status" value="1"/>
</dbReference>
<dbReference type="Gene3D" id="1.10.1900.20">
    <property type="entry name" value="Ribosomal protein L20"/>
    <property type="match status" value="1"/>
</dbReference>
<dbReference type="HAMAP" id="MF_00382">
    <property type="entry name" value="Ribosomal_bL20"/>
    <property type="match status" value="1"/>
</dbReference>
<dbReference type="InterPro" id="IPR005813">
    <property type="entry name" value="Ribosomal_bL20"/>
</dbReference>
<dbReference type="InterPro" id="IPR049946">
    <property type="entry name" value="RIBOSOMAL_L20_CS"/>
</dbReference>
<dbReference type="InterPro" id="IPR035566">
    <property type="entry name" value="Ribosomal_protein_bL20_C"/>
</dbReference>
<dbReference type="NCBIfam" id="TIGR01032">
    <property type="entry name" value="rplT_bact"/>
    <property type="match status" value="1"/>
</dbReference>
<dbReference type="PANTHER" id="PTHR10986">
    <property type="entry name" value="39S RIBOSOMAL PROTEIN L20"/>
    <property type="match status" value="1"/>
</dbReference>
<dbReference type="Pfam" id="PF00453">
    <property type="entry name" value="Ribosomal_L20"/>
    <property type="match status" value="1"/>
</dbReference>
<dbReference type="PRINTS" id="PR00062">
    <property type="entry name" value="RIBOSOMALL20"/>
</dbReference>
<dbReference type="SUPFAM" id="SSF74731">
    <property type="entry name" value="Ribosomal protein L20"/>
    <property type="match status" value="1"/>
</dbReference>
<dbReference type="PROSITE" id="PS00937">
    <property type="entry name" value="RIBOSOMAL_L20"/>
    <property type="match status" value="1"/>
</dbReference>
<evidence type="ECO:0000255" key="1">
    <source>
        <dbReference type="HAMAP-Rule" id="MF_00382"/>
    </source>
</evidence>
<evidence type="ECO:0000305" key="2"/>
<gene>
    <name evidence="1" type="primary">rplT</name>
    <name evidence="1" type="synonym">rpl20</name>
    <name type="ordered locus">Syncc9902_0054</name>
</gene>
<sequence length="115" mass="13130">MARVKRGNVARKRRNKILRLARGFRGGNGTQFRTANQRVMKALCNAYRDRRRRKRDFRRLWIARINAAARINGVSYSRLMGGLKKADVRINRKMLAQLAVADPASFTTVVTAAKS</sequence>
<feature type="chain" id="PRO_0000243747" description="Large ribosomal subunit protein bL20">
    <location>
        <begin position="1"/>
        <end position="115"/>
    </location>
</feature>
<accession>Q3B0U9</accession>
<organism>
    <name type="scientific">Synechococcus sp. (strain CC9902)</name>
    <dbReference type="NCBI Taxonomy" id="316279"/>
    <lineage>
        <taxon>Bacteria</taxon>
        <taxon>Bacillati</taxon>
        <taxon>Cyanobacteriota</taxon>
        <taxon>Cyanophyceae</taxon>
        <taxon>Synechococcales</taxon>
        <taxon>Synechococcaceae</taxon>
        <taxon>Synechococcus</taxon>
    </lineage>
</organism>
<keyword id="KW-1185">Reference proteome</keyword>
<keyword id="KW-0687">Ribonucleoprotein</keyword>
<keyword id="KW-0689">Ribosomal protein</keyword>
<keyword id="KW-0694">RNA-binding</keyword>
<keyword id="KW-0699">rRNA-binding</keyword>